<accession>O14287</accession>
<proteinExistence type="predicted"/>
<sequence>MADGLELSAELSVHTGTVTHTIFVYVFLGKSKRLKTFSDSNVGSVIKLEAGFAVWSRCEAANGEWMEADNEDRCRLYQIYRESKLKEFARYNVLSRVNW</sequence>
<dbReference type="EMBL" id="CU329670">
    <property type="protein sequence ID" value="CAB16401.1"/>
    <property type="molecule type" value="Genomic_DNA"/>
</dbReference>
<dbReference type="PIR" id="T39208">
    <property type="entry name" value="T39208"/>
</dbReference>
<dbReference type="RefSeq" id="NP_594574.1">
    <property type="nucleotide sequence ID" value="NM_001020003.2"/>
</dbReference>
<dbReference type="iPTMnet" id="O14287"/>
<dbReference type="PaxDb" id="4896-SPAC9E9.01.1"/>
<dbReference type="EnsemblFungi" id="SPAC9E9.01.1">
    <property type="protein sequence ID" value="SPAC9E9.01.1:pep"/>
    <property type="gene ID" value="SPAC9E9.01"/>
</dbReference>
<dbReference type="KEGG" id="spo:2543299"/>
<dbReference type="PomBase" id="SPAC9E9.01"/>
<dbReference type="VEuPathDB" id="FungiDB:SPAC9E9.01"/>
<dbReference type="HOGENOM" id="CLU_2321697_0_0_1"/>
<dbReference type="InParanoid" id="O14287"/>
<dbReference type="PRO" id="PR:O14287"/>
<dbReference type="Proteomes" id="UP000002485">
    <property type="component" value="Chromosome I"/>
</dbReference>
<dbReference type="GO" id="GO:0016020">
    <property type="term" value="C:membrane"/>
    <property type="evidence" value="ECO:0007669"/>
    <property type="project" value="UniProtKB-SubCell"/>
</dbReference>
<feature type="chain" id="PRO_0000303980" description="Putative uncharacterized protein C9E9.01">
    <location>
        <begin position="1"/>
        <end position="99"/>
    </location>
</feature>
<feature type="transmembrane region" description="Helical" evidence="1">
    <location>
        <begin position="10"/>
        <end position="29"/>
    </location>
</feature>
<name>YF11_SCHPO</name>
<evidence type="ECO:0000255" key="1"/>
<evidence type="ECO:0000305" key="2"/>
<reference key="1">
    <citation type="journal article" date="2002" name="Nature">
        <title>The genome sequence of Schizosaccharomyces pombe.</title>
        <authorList>
            <person name="Wood V."/>
            <person name="Gwilliam R."/>
            <person name="Rajandream M.A."/>
            <person name="Lyne M.H."/>
            <person name="Lyne R."/>
            <person name="Stewart A."/>
            <person name="Sgouros J.G."/>
            <person name="Peat N."/>
            <person name="Hayles J."/>
            <person name="Baker S.G."/>
            <person name="Basham D."/>
            <person name="Bowman S."/>
            <person name="Brooks K."/>
            <person name="Brown D."/>
            <person name="Brown S."/>
            <person name="Chillingworth T."/>
            <person name="Churcher C.M."/>
            <person name="Collins M."/>
            <person name="Connor R."/>
            <person name="Cronin A."/>
            <person name="Davis P."/>
            <person name="Feltwell T."/>
            <person name="Fraser A."/>
            <person name="Gentles S."/>
            <person name="Goble A."/>
            <person name="Hamlin N."/>
            <person name="Harris D.E."/>
            <person name="Hidalgo J."/>
            <person name="Hodgson G."/>
            <person name="Holroyd S."/>
            <person name="Hornsby T."/>
            <person name="Howarth S."/>
            <person name="Huckle E.J."/>
            <person name="Hunt S."/>
            <person name="Jagels K."/>
            <person name="James K.D."/>
            <person name="Jones L."/>
            <person name="Jones M."/>
            <person name="Leather S."/>
            <person name="McDonald S."/>
            <person name="McLean J."/>
            <person name="Mooney P."/>
            <person name="Moule S."/>
            <person name="Mungall K.L."/>
            <person name="Murphy L.D."/>
            <person name="Niblett D."/>
            <person name="Odell C."/>
            <person name="Oliver K."/>
            <person name="O'Neil S."/>
            <person name="Pearson D."/>
            <person name="Quail M.A."/>
            <person name="Rabbinowitsch E."/>
            <person name="Rutherford K.M."/>
            <person name="Rutter S."/>
            <person name="Saunders D."/>
            <person name="Seeger K."/>
            <person name="Sharp S."/>
            <person name="Skelton J."/>
            <person name="Simmonds M.N."/>
            <person name="Squares R."/>
            <person name="Squares S."/>
            <person name="Stevens K."/>
            <person name="Taylor K."/>
            <person name="Taylor R.G."/>
            <person name="Tivey A."/>
            <person name="Walsh S.V."/>
            <person name="Warren T."/>
            <person name="Whitehead S."/>
            <person name="Woodward J.R."/>
            <person name="Volckaert G."/>
            <person name="Aert R."/>
            <person name="Robben J."/>
            <person name="Grymonprez B."/>
            <person name="Weltjens I."/>
            <person name="Vanstreels E."/>
            <person name="Rieger M."/>
            <person name="Schaefer M."/>
            <person name="Mueller-Auer S."/>
            <person name="Gabel C."/>
            <person name="Fuchs M."/>
            <person name="Duesterhoeft A."/>
            <person name="Fritzc C."/>
            <person name="Holzer E."/>
            <person name="Moestl D."/>
            <person name="Hilbert H."/>
            <person name="Borzym K."/>
            <person name="Langer I."/>
            <person name="Beck A."/>
            <person name="Lehrach H."/>
            <person name="Reinhardt R."/>
            <person name="Pohl T.M."/>
            <person name="Eger P."/>
            <person name="Zimmermann W."/>
            <person name="Wedler H."/>
            <person name="Wambutt R."/>
            <person name="Purnelle B."/>
            <person name="Goffeau A."/>
            <person name="Cadieu E."/>
            <person name="Dreano S."/>
            <person name="Gloux S."/>
            <person name="Lelaure V."/>
            <person name="Mottier S."/>
            <person name="Galibert F."/>
            <person name="Aves S.J."/>
            <person name="Xiang Z."/>
            <person name="Hunt C."/>
            <person name="Moore K."/>
            <person name="Hurst S.M."/>
            <person name="Lucas M."/>
            <person name="Rochet M."/>
            <person name="Gaillardin C."/>
            <person name="Tallada V.A."/>
            <person name="Garzon A."/>
            <person name="Thode G."/>
            <person name="Daga R.R."/>
            <person name="Cruzado L."/>
            <person name="Jimenez J."/>
            <person name="Sanchez M."/>
            <person name="del Rey F."/>
            <person name="Benito J."/>
            <person name="Dominguez A."/>
            <person name="Revuelta J.L."/>
            <person name="Moreno S."/>
            <person name="Armstrong J."/>
            <person name="Forsburg S.L."/>
            <person name="Cerutti L."/>
            <person name="Lowe T."/>
            <person name="McCombie W.R."/>
            <person name="Paulsen I."/>
            <person name="Potashkin J."/>
            <person name="Shpakovski G.V."/>
            <person name="Ussery D."/>
            <person name="Barrell B.G."/>
            <person name="Nurse P."/>
        </authorList>
    </citation>
    <scope>NUCLEOTIDE SEQUENCE [LARGE SCALE GENOMIC DNA]</scope>
    <source>
        <strain>972 / ATCC 24843</strain>
    </source>
</reference>
<keyword id="KW-0472">Membrane</keyword>
<keyword id="KW-1185">Reference proteome</keyword>
<keyword id="KW-0812">Transmembrane</keyword>
<keyword id="KW-1133">Transmembrane helix</keyword>
<protein>
    <recommendedName>
        <fullName>Putative uncharacterized protein C9E9.01</fullName>
    </recommendedName>
</protein>
<comment type="subcellular location">
    <subcellularLocation>
        <location evidence="2">Membrane</location>
        <topology evidence="2">Single-pass membrane protein</topology>
    </subcellularLocation>
</comment>
<organism>
    <name type="scientific">Schizosaccharomyces pombe (strain 972 / ATCC 24843)</name>
    <name type="common">Fission yeast</name>
    <dbReference type="NCBI Taxonomy" id="284812"/>
    <lineage>
        <taxon>Eukaryota</taxon>
        <taxon>Fungi</taxon>
        <taxon>Dikarya</taxon>
        <taxon>Ascomycota</taxon>
        <taxon>Taphrinomycotina</taxon>
        <taxon>Schizosaccharomycetes</taxon>
        <taxon>Schizosaccharomycetales</taxon>
        <taxon>Schizosaccharomycetaceae</taxon>
        <taxon>Schizosaccharomyces</taxon>
    </lineage>
</organism>
<gene>
    <name type="ORF">SPAC9E9.01</name>
</gene>